<evidence type="ECO:0000255" key="1">
    <source>
        <dbReference type="HAMAP-Rule" id="MF_00480"/>
    </source>
</evidence>
<evidence type="ECO:0000305" key="2"/>
<accession>Q7VRN8</accession>
<name>RS7_BLOFL</name>
<feature type="chain" id="PRO_0000124239" description="Small ribosomal subunit protein uS7">
    <location>
        <begin position="1"/>
        <end position="157"/>
    </location>
</feature>
<comment type="function">
    <text evidence="1">One of the primary rRNA binding proteins, it binds directly to 16S rRNA where it nucleates assembly of the head domain of the 30S subunit. Is located at the subunit interface close to the decoding center, probably blocks exit of the E-site tRNA.</text>
</comment>
<comment type="subunit">
    <text evidence="1">Part of the 30S ribosomal subunit. Contacts proteins S9 and S11.</text>
</comment>
<comment type="similarity">
    <text evidence="1">Belongs to the universal ribosomal protein uS7 family.</text>
</comment>
<reference key="1">
    <citation type="journal article" date="2003" name="Proc. Natl. Acad. Sci. U.S.A.">
        <title>The genome sequence of Blochmannia floridanus: comparative analysis of reduced genomes.</title>
        <authorList>
            <person name="Gil R."/>
            <person name="Silva F.J."/>
            <person name="Zientz E."/>
            <person name="Delmotte F."/>
            <person name="Gonzalez-Candelas F."/>
            <person name="Latorre A."/>
            <person name="Rausell C."/>
            <person name="Kamerbeek J."/>
            <person name="Gadau J."/>
            <person name="Hoelldobler B."/>
            <person name="van Ham R.C.H.J."/>
            <person name="Gross R."/>
            <person name="Moya A."/>
        </authorList>
    </citation>
    <scope>NUCLEOTIDE SEQUENCE [LARGE SCALE GENOMIC DNA]</scope>
</reference>
<keyword id="KW-1185">Reference proteome</keyword>
<keyword id="KW-0687">Ribonucleoprotein</keyword>
<keyword id="KW-0689">Ribosomal protein</keyword>
<keyword id="KW-0694">RNA-binding</keyword>
<keyword id="KW-0699">rRNA-binding</keyword>
<keyword id="KW-0820">tRNA-binding</keyword>
<proteinExistence type="inferred from homology"/>
<gene>
    <name evidence="1" type="primary">rpsG</name>
    <name type="ordered locus">Bfl566</name>
</gene>
<protein>
    <recommendedName>
        <fullName evidence="1">Small ribosomal subunit protein uS7</fullName>
    </recommendedName>
    <alternativeName>
        <fullName evidence="2">30S ribosomal protein S7</fullName>
    </alternativeName>
</protein>
<sequence length="157" mass="18221">MSRRRVTVKRVILADPRFKSDLLSKFINILMFNGKKSVAESIIYSALDMVLDRSSKDSCMELFEEALDNVRPVVEVKSRRVGGSTYQVPVEVRLVRRNTLAMRWIIESARKRNDKSMEMRLANELFDASEGKGNAVKKREEVHRLAESNKAFAHYRW</sequence>
<dbReference type="EMBL" id="BX248583">
    <property type="protein sequence ID" value="CAD83248.1"/>
    <property type="molecule type" value="Genomic_DNA"/>
</dbReference>
<dbReference type="SMR" id="Q7VRN8"/>
<dbReference type="STRING" id="203907.Bfl566"/>
<dbReference type="KEGG" id="bfl:Bfl566"/>
<dbReference type="eggNOG" id="COG0049">
    <property type="taxonomic scope" value="Bacteria"/>
</dbReference>
<dbReference type="HOGENOM" id="CLU_072226_1_1_6"/>
<dbReference type="OrthoDB" id="9807653at2"/>
<dbReference type="Proteomes" id="UP000002192">
    <property type="component" value="Chromosome"/>
</dbReference>
<dbReference type="GO" id="GO:0015935">
    <property type="term" value="C:small ribosomal subunit"/>
    <property type="evidence" value="ECO:0007669"/>
    <property type="project" value="InterPro"/>
</dbReference>
<dbReference type="GO" id="GO:0019843">
    <property type="term" value="F:rRNA binding"/>
    <property type="evidence" value="ECO:0007669"/>
    <property type="project" value="UniProtKB-UniRule"/>
</dbReference>
<dbReference type="GO" id="GO:0003735">
    <property type="term" value="F:structural constituent of ribosome"/>
    <property type="evidence" value="ECO:0007669"/>
    <property type="project" value="InterPro"/>
</dbReference>
<dbReference type="GO" id="GO:0000049">
    <property type="term" value="F:tRNA binding"/>
    <property type="evidence" value="ECO:0007669"/>
    <property type="project" value="UniProtKB-UniRule"/>
</dbReference>
<dbReference type="GO" id="GO:0006412">
    <property type="term" value="P:translation"/>
    <property type="evidence" value="ECO:0007669"/>
    <property type="project" value="UniProtKB-UniRule"/>
</dbReference>
<dbReference type="CDD" id="cd14869">
    <property type="entry name" value="uS7_Bacteria"/>
    <property type="match status" value="1"/>
</dbReference>
<dbReference type="FunFam" id="1.10.455.10:FF:000001">
    <property type="entry name" value="30S ribosomal protein S7"/>
    <property type="match status" value="1"/>
</dbReference>
<dbReference type="Gene3D" id="1.10.455.10">
    <property type="entry name" value="Ribosomal protein S7 domain"/>
    <property type="match status" value="1"/>
</dbReference>
<dbReference type="HAMAP" id="MF_00480_B">
    <property type="entry name" value="Ribosomal_uS7_B"/>
    <property type="match status" value="1"/>
</dbReference>
<dbReference type="InterPro" id="IPR000235">
    <property type="entry name" value="Ribosomal_uS7"/>
</dbReference>
<dbReference type="InterPro" id="IPR005717">
    <property type="entry name" value="Ribosomal_uS7_bac/org-type"/>
</dbReference>
<dbReference type="InterPro" id="IPR020606">
    <property type="entry name" value="Ribosomal_uS7_CS"/>
</dbReference>
<dbReference type="InterPro" id="IPR023798">
    <property type="entry name" value="Ribosomal_uS7_dom"/>
</dbReference>
<dbReference type="InterPro" id="IPR036823">
    <property type="entry name" value="Ribosomal_uS7_dom_sf"/>
</dbReference>
<dbReference type="NCBIfam" id="TIGR01029">
    <property type="entry name" value="rpsG_bact"/>
    <property type="match status" value="1"/>
</dbReference>
<dbReference type="PANTHER" id="PTHR11205">
    <property type="entry name" value="RIBOSOMAL PROTEIN S7"/>
    <property type="match status" value="1"/>
</dbReference>
<dbReference type="Pfam" id="PF00177">
    <property type="entry name" value="Ribosomal_S7"/>
    <property type="match status" value="1"/>
</dbReference>
<dbReference type="PIRSF" id="PIRSF002122">
    <property type="entry name" value="RPS7p_RPS7a_RPS5e_RPS7o"/>
    <property type="match status" value="1"/>
</dbReference>
<dbReference type="SUPFAM" id="SSF47973">
    <property type="entry name" value="Ribosomal protein S7"/>
    <property type="match status" value="1"/>
</dbReference>
<dbReference type="PROSITE" id="PS00052">
    <property type="entry name" value="RIBOSOMAL_S7"/>
    <property type="match status" value="1"/>
</dbReference>
<organism>
    <name type="scientific">Blochmanniella floridana</name>
    <dbReference type="NCBI Taxonomy" id="203907"/>
    <lineage>
        <taxon>Bacteria</taxon>
        <taxon>Pseudomonadati</taxon>
        <taxon>Pseudomonadota</taxon>
        <taxon>Gammaproteobacteria</taxon>
        <taxon>Enterobacterales</taxon>
        <taxon>Enterobacteriaceae</taxon>
        <taxon>ant endosymbionts</taxon>
        <taxon>Candidatus Blochmanniella</taxon>
    </lineage>
</organism>